<gene>
    <name type="primary">rps2</name>
</gene>
<organism>
    <name type="scientific">Solanum lycopersicum</name>
    <name type="common">Tomato</name>
    <name type="synonym">Lycopersicon esculentum</name>
    <dbReference type="NCBI Taxonomy" id="4081"/>
    <lineage>
        <taxon>Eukaryota</taxon>
        <taxon>Viridiplantae</taxon>
        <taxon>Streptophyta</taxon>
        <taxon>Embryophyta</taxon>
        <taxon>Tracheophyta</taxon>
        <taxon>Spermatophyta</taxon>
        <taxon>Magnoliopsida</taxon>
        <taxon>eudicotyledons</taxon>
        <taxon>Gunneridae</taxon>
        <taxon>Pentapetalae</taxon>
        <taxon>asterids</taxon>
        <taxon>lamiids</taxon>
        <taxon>Solanales</taxon>
        <taxon>Solanaceae</taxon>
        <taxon>Solanoideae</taxon>
        <taxon>Solaneae</taxon>
        <taxon>Solanum</taxon>
        <taxon>Solanum subgen. Lycopersicon</taxon>
    </lineage>
</organism>
<reference key="1">
    <citation type="journal article" date="2006" name="Theor. Appl. Genet.">
        <title>Complete chloroplast genome sequences of Solanum bulbocastanum, Solanum lycopersicum and comparative analyses with other Solanaceae genomes.</title>
        <authorList>
            <person name="Daniell H."/>
            <person name="Lee S.-B."/>
            <person name="Grevich J."/>
            <person name="Saski C."/>
            <person name="Quesada-Vargas T."/>
            <person name="Guda C."/>
            <person name="Tomkins J."/>
            <person name="Jansen R.K."/>
        </authorList>
    </citation>
    <scope>NUCLEOTIDE SEQUENCE [LARGE SCALE GENOMIC DNA]</scope>
    <source>
        <strain>cv. LA3023</strain>
    </source>
</reference>
<reference key="2">
    <citation type="journal article" date="2006" name="J. Mol. Evol.">
        <title>Sequence of the tomato chloroplast DNA and evolutionary comparison of solanaceous plastid genomes.</title>
        <authorList>
            <person name="Kahlau S."/>
            <person name="Aspinall S."/>
            <person name="Gray J.C."/>
            <person name="Bock R."/>
        </authorList>
    </citation>
    <scope>NUCLEOTIDE SEQUENCE [LARGE SCALE GENOMIC DNA]</scope>
    <source>
        <strain>cv. IPA-6</strain>
    </source>
</reference>
<accession>Q2MIB1</accession>
<proteinExistence type="inferred from homology"/>
<feature type="chain" id="PRO_0000277423" description="Small ribosomal subunit protein uS2c">
    <location>
        <begin position="1"/>
        <end position="236"/>
    </location>
</feature>
<name>RR2_SOLLC</name>
<geneLocation type="chloroplast"/>
<comment type="subcellular location">
    <subcellularLocation>
        <location>Plastid</location>
        <location>Chloroplast</location>
    </subcellularLocation>
</comment>
<comment type="similarity">
    <text evidence="1">Belongs to the universal ribosomal protein uS2 family.</text>
</comment>
<sequence length="236" mass="26943">MTRRYWNINLEEMMEAGVHFGHGTRKWNPKMAPYISAKRKGIHITNLTRTARFLSEACDLVFDAASRGKQFLIVGTKNKAADSVEWAAIRARCHYVNKKWLGGMLTNWSTTETRLHKFRDLRMEQKTGRLNRLPKRDAAMLKRQLSRLQTYLGGIKYMTGVPDIVIIVDQHEEYTALRECITLGIPTICLTDTNCDPDLADISIPANDDAISSIRLILNKLVFAICEGRSSYIRNP</sequence>
<evidence type="ECO:0000305" key="1"/>
<protein>
    <recommendedName>
        <fullName evidence="1">Small ribosomal subunit protein uS2c</fullName>
    </recommendedName>
    <alternativeName>
        <fullName>30S ribosomal protein S2, chloroplastic</fullName>
    </alternativeName>
</protein>
<keyword id="KW-0150">Chloroplast</keyword>
<keyword id="KW-0934">Plastid</keyword>
<keyword id="KW-1185">Reference proteome</keyword>
<keyword id="KW-0687">Ribonucleoprotein</keyword>
<keyword id="KW-0689">Ribosomal protein</keyword>
<dbReference type="EMBL" id="DQ347959">
    <property type="protein sequence ID" value="ABC56289.1"/>
    <property type="molecule type" value="Genomic_DNA"/>
</dbReference>
<dbReference type="EMBL" id="AM087200">
    <property type="protein sequence ID" value="CAJ32382.1"/>
    <property type="molecule type" value="Genomic_DNA"/>
</dbReference>
<dbReference type="RefSeq" id="AP_004917.1">
    <property type="nucleotide sequence ID" value="AC_000188.1"/>
</dbReference>
<dbReference type="RefSeq" id="YP_008563077.1">
    <property type="nucleotide sequence ID" value="NC_007898.3"/>
</dbReference>
<dbReference type="SMR" id="Q2MIB1"/>
<dbReference type="FunCoup" id="Q2MIB1">
    <property type="interactions" value="596"/>
</dbReference>
<dbReference type="STRING" id="4081.Q2MIB1"/>
<dbReference type="PaxDb" id="4081-Solyc08g028880.1.1"/>
<dbReference type="GeneID" id="3950420"/>
<dbReference type="KEGG" id="sly:3950420"/>
<dbReference type="eggNOG" id="KOG0832">
    <property type="taxonomic scope" value="Eukaryota"/>
</dbReference>
<dbReference type="InParanoid" id="Q2MIB1"/>
<dbReference type="OrthoDB" id="565471at2759"/>
<dbReference type="Proteomes" id="UP000004994">
    <property type="component" value="Chloroplast"/>
</dbReference>
<dbReference type="ExpressionAtlas" id="Q2MIB1">
    <property type="expression patterns" value="baseline"/>
</dbReference>
<dbReference type="GO" id="GO:0009507">
    <property type="term" value="C:chloroplast"/>
    <property type="evidence" value="ECO:0007669"/>
    <property type="project" value="UniProtKB-SubCell"/>
</dbReference>
<dbReference type="GO" id="GO:0005763">
    <property type="term" value="C:mitochondrial small ribosomal subunit"/>
    <property type="evidence" value="ECO:0000318"/>
    <property type="project" value="GO_Central"/>
</dbReference>
<dbReference type="GO" id="GO:0003735">
    <property type="term" value="F:structural constituent of ribosome"/>
    <property type="evidence" value="ECO:0000318"/>
    <property type="project" value="GO_Central"/>
</dbReference>
<dbReference type="GO" id="GO:0006412">
    <property type="term" value="P:translation"/>
    <property type="evidence" value="ECO:0007669"/>
    <property type="project" value="UniProtKB-UniRule"/>
</dbReference>
<dbReference type="CDD" id="cd01425">
    <property type="entry name" value="RPS2"/>
    <property type="match status" value="1"/>
</dbReference>
<dbReference type="FunFam" id="3.40.50.10490:FF:000101">
    <property type="match status" value="1"/>
</dbReference>
<dbReference type="FunFam" id="1.10.287.610:FF:000001">
    <property type="entry name" value="30S ribosomal protein S2"/>
    <property type="match status" value="1"/>
</dbReference>
<dbReference type="FunFam" id="3.40.50.10490:FF:000008">
    <property type="entry name" value="30S ribosomal protein S2, chloroplastic"/>
    <property type="match status" value="1"/>
</dbReference>
<dbReference type="Gene3D" id="3.40.50.10490">
    <property type="entry name" value="Glucose-6-phosphate isomerase like protein, domain 1"/>
    <property type="match status" value="1"/>
</dbReference>
<dbReference type="Gene3D" id="1.10.287.610">
    <property type="entry name" value="Helix hairpin bin"/>
    <property type="match status" value="1"/>
</dbReference>
<dbReference type="HAMAP" id="MF_00291_B">
    <property type="entry name" value="Ribosomal_uS2_B"/>
    <property type="match status" value="1"/>
</dbReference>
<dbReference type="InterPro" id="IPR001865">
    <property type="entry name" value="Ribosomal_uS2"/>
</dbReference>
<dbReference type="InterPro" id="IPR005706">
    <property type="entry name" value="Ribosomal_uS2_bac/mit/plastid"/>
</dbReference>
<dbReference type="InterPro" id="IPR018130">
    <property type="entry name" value="Ribosomal_uS2_CS"/>
</dbReference>
<dbReference type="InterPro" id="IPR023591">
    <property type="entry name" value="Ribosomal_uS2_flav_dom_sf"/>
</dbReference>
<dbReference type="NCBIfam" id="TIGR01011">
    <property type="entry name" value="rpsB_bact"/>
    <property type="match status" value="1"/>
</dbReference>
<dbReference type="PANTHER" id="PTHR12534">
    <property type="entry name" value="30S RIBOSOMAL PROTEIN S2 PROKARYOTIC AND ORGANELLAR"/>
    <property type="match status" value="1"/>
</dbReference>
<dbReference type="PANTHER" id="PTHR12534:SF0">
    <property type="entry name" value="SMALL RIBOSOMAL SUBUNIT PROTEIN US2M"/>
    <property type="match status" value="1"/>
</dbReference>
<dbReference type="Pfam" id="PF00318">
    <property type="entry name" value="Ribosomal_S2"/>
    <property type="match status" value="1"/>
</dbReference>
<dbReference type="PRINTS" id="PR00395">
    <property type="entry name" value="RIBOSOMALS2"/>
</dbReference>
<dbReference type="SUPFAM" id="SSF52313">
    <property type="entry name" value="Ribosomal protein S2"/>
    <property type="match status" value="1"/>
</dbReference>
<dbReference type="PROSITE" id="PS00962">
    <property type="entry name" value="RIBOSOMAL_S2_1"/>
    <property type="match status" value="1"/>
</dbReference>
<dbReference type="PROSITE" id="PS00963">
    <property type="entry name" value="RIBOSOMAL_S2_2"/>
    <property type="match status" value="1"/>
</dbReference>